<dbReference type="EC" id="2.3.1.181"/>
<dbReference type="EMBL" id="AF022186">
    <property type="protein sequence ID" value="AAB82691.1"/>
    <property type="molecule type" value="Genomic_DNA"/>
</dbReference>
<dbReference type="PIR" id="T11966">
    <property type="entry name" value="T11966"/>
</dbReference>
<dbReference type="RefSeq" id="NP_045070.1">
    <property type="nucleotide sequence ID" value="NC_001840.1"/>
</dbReference>
<dbReference type="SMR" id="O19898"/>
<dbReference type="GeneID" id="800233"/>
<dbReference type="UniPathway" id="UPA00538">
    <property type="reaction ID" value="UER00592"/>
</dbReference>
<dbReference type="GO" id="GO:0009507">
    <property type="term" value="C:chloroplast"/>
    <property type="evidence" value="ECO:0007669"/>
    <property type="project" value="UniProtKB-SubCell"/>
</dbReference>
<dbReference type="GO" id="GO:0033819">
    <property type="term" value="F:lipoyl(octanoyl) transferase activity"/>
    <property type="evidence" value="ECO:0007669"/>
    <property type="project" value="UniProtKB-EC"/>
</dbReference>
<dbReference type="GO" id="GO:0036211">
    <property type="term" value="P:protein modification process"/>
    <property type="evidence" value="ECO:0007669"/>
    <property type="project" value="InterPro"/>
</dbReference>
<dbReference type="CDD" id="cd16444">
    <property type="entry name" value="LipB"/>
    <property type="match status" value="1"/>
</dbReference>
<dbReference type="Gene3D" id="3.30.930.10">
    <property type="entry name" value="Bira Bifunctional Protein, Domain 2"/>
    <property type="match status" value="1"/>
</dbReference>
<dbReference type="InterPro" id="IPR045864">
    <property type="entry name" value="aa-tRNA-synth_II/BPL/LPL"/>
</dbReference>
<dbReference type="InterPro" id="IPR004143">
    <property type="entry name" value="BPL_LPL_catalytic"/>
</dbReference>
<dbReference type="InterPro" id="IPR000544">
    <property type="entry name" value="Octanoyltransferase"/>
</dbReference>
<dbReference type="InterPro" id="IPR020605">
    <property type="entry name" value="Octanoyltransferase_CS"/>
</dbReference>
<dbReference type="NCBIfam" id="TIGR00214">
    <property type="entry name" value="lipB"/>
    <property type="match status" value="1"/>
</dbReference>
<dbReference type="PANTHER" id="PTHR10993:SF7">
    <property type="entry name" value="LIPOYLTRANSFERASE 2, MITOCHONDRIAL-RELATED"/>
    <property type="match status" value="1"/>
</dbReference>
<dbReference type="PANTHER" id="PTHR10993">
    <property type="entry name" value="OCTANOYLTRANSFERASE"/>
    <property type="match status" value="1"/>
</dbReference>
<dbReference type="Pfam" id="PF21948">
    <property type="entry name" value="LplA-B_cat"/>
    <property type="match status" value="1"/>
</dbReference>
<dbReference type="PIRSF" id="PIRSF016262">
    <property type="entry name" value="LPLase"/>
    <property type="match status" value="1"/>
</dbReference>
<dbReference type="SUPFAM" id="SSF55681">
    <property type="entry name" value="Class II aaRS and biotin synthetases"/>
    <property type="match status" value="1"/>
</dbReference>
<dbReference type="PROSITE" id="PS51733">
    <property type="entry name" value="BPL_LPL_CATALYTIC"/>
    <property type="match status" value="1"/>
</dbReference>
<dbReference type="PROSITE" id="PS01313">
    <property type="entry name" value="LIPB"/>
    <property type="match status" value="1"/>
</dbReference>
<feature type="chain" id="PRO_0000062906" description="Probable octanoyltransferase">
    <location>
        <begin position="1"/>
        <end position="214"/>
    </location>
</feature>
<feature type="domain" description="BPL/LPL catalytic" evidence="2">
    <location>
        <begin position="30"/>
        <end position="214"/>
    </location>
</feature>
<feature type="active site" description="Acyl-thioester intermediate" evidence="1">
    <location>
        <position position="170"/>
    </location>
</feature>
<feature type="binding site" evidence="1">
    <location>
        <begin position="72"/>
        <end position="79"/>
    </location>
    <ligand>
        <name>substrate</name>
    </ligand>
</feature>
<feature type="binding site" evidence="1">
    <location>
        <begin position="139"/>
        <end position="141"/>
    </location>
    <ligand>
        <name>substrate</name>
    </ligand>
</feature>
<feature type="binding site" evidence="1">
    <location>
        <begin position="152"/>
        <end position="154"/>
    </location>
    <ligand>
        <name>substrate</name>
    </ligand>
</feature>
<feature type="site" description="Lowers pKa of active site Cys" evidence="1">
    <location>
        <position position="136"/>
    </location>
</feature>
<proteinExistence type="inferred from homology"/>
<name>LIPB_CYACA</name>
<sequence length="214" mass="25266">MMLIIRYGLLNFETSWVHQKTMVFIQIRKRQKKKLSIYLKHPQVYTLGHRANKEYISFCSNNTLVNLHRVDRGGEVTYHDYGQVIIYNITHLQKINRNVNIYIANLEQLGKRILLLYKTKSTKKEKFPGIWIQQKKIVALGIKIIQRTTFHGLSINFSCSKRNYELILACGIKDGISVNFNEIHKKNSQNQFYWKYKIVLLIVDILAFNNIISF</sequence>
<protein>
    <recommendedName>
        <fullName>Probable octanoyltransferase</fullName>
        <ecNumber>2.3.1.181</ecNumber>
    </recommendedName>
    <alternativeName>
        <fullName>Lipoate-protein ligase B</fullName>
    </alternativeName>
    <alternativeName>
        <fullName>Lipoyl/octanoyl transferase</fullName>
    </alternativeName>
    <alternativeName>
        <fullName>Octanoyl-[acyl-carrier-protein]-protein N-octanoyltransferase</fullName>
    </alternativeName>
</protein>
<evidence type="ECO:0000250" key="1"/>
<evidence type="ECO:0000255" key="2">
    <source>
        <dbReference type="PROSITE-ProRule" id="PRU01067"/>
    </source>
</evidence>
<evidence type="ECO:0000305" key="3"/>
<gene>
    <name type="primary">lipB</name>
</gene>
<organism>
    <name type="scientific">Cyanidium caldarium</name>
    <name type="common">Red alga</name>
    <dbReference type="NCBI Taxonomy" id="2771"/>
    <lineage>
        <taxon>Eukaryota</taxon>
        <taxon>Rhodophyta</taxon>
        <taxon>Bangiophyceae</taxon>
        <taxon>Cyanidiales</taxon>
        <taxon>Cyanidiaceae</taxon>
        <taxon>Cyanidium</taxon>
    </lineage>
</organism>
<geneLocation type="chloroplast"/>
<comment type="function">
    <text evidence="1">Catalyzes the transfer of endogenously produced octanoic acid from octanoyl-acyl-carrier-protein onto the lipoyl domains of lipoate-dependent enzymes. Lipoyl-ACP can also act as a substrate although octanoyl-ACP is likely to be the physiological substrate (By similarity).</text>
</comment>
<comment type="catalytic activity">
    <reaction>
        <text>octanoyl-[ACP] + L-lysyl-[protein] = N(6)-octanoyl-L-lysyl-[protein] + holo-[ACP] + H(+)</text>
        <dbReference type="Rhea" id="RHEA:17665"/>
        <dbReference type="Rhea" id="RHEA-COMP:9636"/>
        <dbReference type="Rhea" id="RHEA-COMP:9685"/>
        <dbReference type="Rhea" id="RHEA-COMP:9752"/>
        <dbReference type="Rhea" id="RHEA-COMP:9928"/>
        <dbReference type="ChEBI" id="CHEBI:15378"/>
        <dbReference type="ChEBI" id="CHEBI:29969"/>
        <dbReference type="ChEBI" id="CHEBI:64479"/>
        <dbReference type="ChEBI" id="CHEBI:78463"/>
        <dbReference type="ChEBI" id="CHEBI:78809"/>
        <dbReference type="EC" id="2.3.1.181"/>
    </reaction>
</comment>
<comment type="pathway">
    <text>Protein modification; protein lipoylation via endogenous pathway; protein N(6)-(lipoyl)lysine from octanoyl-[acyl-carrier-protein]: step 1/2.</text>
</comment>
<comment type="subcellular location">
    <subcellularLocation>
        <location>Plastid</location>
        <location>Chloroplast</location>
    </subcellularLocation>
</comment>
<comment type="miscellaneous">
    <text evidence="1">In the reaction, the free carboxyl group of octanoic acid is attached via an amide linkage to the epsilon-amino group of a specific lysine residue of lipoyl domains of lipoate-dependent enzymes.</text>
</comment>
<comment type="similarity">
    <text evidence="3">Belongs to the LipB family.</text>
</comment>
<reference key="1">
    <citation type="journal article" date="2000" name="J. Mol. Evol.">
        <title>The structure and gene repertoire of an ancient red algal plastid genome.</title>
        <authorList>
            <person name="Gloeckner G."/>
            <person name="Rosenthal A."/>
            <person name="Valentin K.-U."/>
        </authorList>
    </citation>
    <scope>NUCLEOTIDE SEQUENCE [LARGE SCALE GENOMIC DNA]</scope>
    <source>
        <strain>RK-1</strain>
    </source>
</reference>
<accession>O19898</accession>
<keyword id="KW-0012">Acyltransferase</keyword>
<keyword id="KW-0150">Chloroplast</keyword>
<keyword id="KW-0934">Plastid</keyword>
<keyword id="KW-0808">Transferase</keyword>